<name>PEPT_STAA3</name>
<protein>
    <recommendedName>
        <fullName evidence="1">Peptidase T</fullName>
        <ecNumber evidence="1">3.4.11.4</ecNumber>
    </recommendedName>
    <alternativeName>
        <fullName evidence="1">Aminotripeptidase</fullName>
        <shortName evidence="1">Tripeptidase</shortName>
    </alternativeName>
    <alternativeName>
        <fullName evidence="1">Tripeptide aminopeptidase</fullName>
    </alternativeName>
</protein>
<evidence type="ECO:0000255" key="1">
    <source>
        <dbReference type="HAMAP-Rule" id="MF_00550"/>
    </source>
</evidence>
<evidence type="ECO:0000256" key="2">
    <source>
        <dbReference type="SAM" id="MobiDB-lite"/>
    </source>
</evidence>
<accession>Q2FIP8</accession>
<feature type="chain" id="PRO_0000274023" description="Peptidase T">
    <location>
        <begin position="1"/>
        <end position="408"/>
    </location>
</feature>
<feature type="region of interest" description="Disordered" evidence="2">
    <location>
        <begin position="1"/>
        <end position="28"/>
    </location>
</feature>
<feature type="compositionally biased region" description="Polar residues" evidence="2">
    <location>
        <begin position="11"/>
        <end position="28"/>
    </location>
</feature>
<feature type="active site" evidence="1">
    <location>
        <position position="80"/>
    </location>
</feature>
<feature type="active site" description="Proton acceptor" evidence="1">
    <location>
        <position position="174"/>
    </location>
</feature>
<feature type="binding site" evidence="1">
    <location>
        <position position="78"/>
    </location>
    <ligand>
        <name>Zn(2+)</name>
        <dbReference type="ChEBI" id="CHEBI:29105"/>
        <label>1</label>
    </ligand>
</feature>
<feature type="binding site" evidence="1">
    <location>
        <position position="140"/>
    </location>
    <ligand>
        <name>Zn(2+)</name>
        <dbReference type="ChEBI" id="CHEBI:29105"/>
        <label>1</label>
    </ligand>
</feature>
<feature type="binding site" evidence="1">
    <location>
        <position position="140"/>
    </location>
    <ligand>
        <name>Zn(2+)</name>
        <dbReference type="ChEBI" id="CHEBI:29105"/>
        <label>2</label>
    </ligand>
</feature>
<feature type="binding site" evidence="1">
    <location>
        <position position="175"/>
    </location>
    <ligand>
        <name>Zn(2+)</name>
        <dbReference type="ChEBI" id="CHEBI:29105"/>
        <label>2</label>
    </ligand>
</feature>
<feature type="binding site" evidence="1">
    <location>
        <position position="197"/>
    </location>
    <ligand>
        <name>Zn(2+)</name>
        <dbReference type="ChEBI" id="CHEBI:29105"/>
        <label>1</label>
    </ligand>
</feature>
<feature type="binding site" evidence="1">
    <location>
        <position position="379"/>
    </location>
    <ligand>
        <name>Zn(2+)</name>
        <dbReference type="ChEBI" id="CHEBI:29105"/>
        <label>2</label>
    </ligand>
</feature>
<comment type="function">
    <text evidence="1">Cleaves the N-terminal amino acid of tripeptides.</text>
</comment>
<comment type="catalytic activity">
    <reaction evidence="1">
        <text>Release of the N-terminal residue from a tripeptide.</text>
        <dbReference type="EC" id="3.4.11.4"/>
    </reaction>
</comment>
<comment type="cofactor">
    <cofactor evidence="1">
        <name>Zn(2+)</name>
        <dbReference type="ChEBI" id="CHEBI:29105"/>
    </cofactor>
    <text evidence="1">Binds 2 Zn(2+) ions per subunit.</text>
</comment>
<comment type="subcellular location">
    <subcellularLocation>
        <location evidence="1">Cytoplasm</location>
    </subcellularLocation>
</comment>
<comment type="similarity">
    <text evidence="1">Belongs to the peptidase M20B family.</text>
</comment>
<dbReference type="EC" id="3.4.11.4" evidence="1"/>
<dbReference type="EMBL" id="CP000255">
    <property type="protein sequence ID" value="ABD20928.1"/>
    <property type="molecule type" value="Genomic_DNA"/>
</dbReference>
<dbReference type="RefSeq" id="WP_000795826.1">
    <property type="nucleotide sequence ID" value="NZ_CP027476.1"/>
</dbReference>
<dbReference type="SMR" id="Q2FIP8"/>
<dbReference type="MEROPS" id="M20.003"/>
<dbReference type="KEGG" id="saa:SAUSA300_0727"/>
<dbReference type="HOGENOM" id="CLU_053676_0_0_9"/>
<dbReference type="OMA" id="GHNFHGK"/>
<dbReference type="Proteomes" id="UP000001939">
    <property type="component" value="Chromosome"/>
</dbReference>
<dbReference type="GO" id="GO:0005829">
    <property type="term" value="C:cytosol"/>
    <property type="evidence" value="ECO:0007669"/>
    <property type="project" value="TreeGrafter"/>
</dbReference>
<dbReference type="GO" id="GO:0008237">
    <property type="term" value="F:metallopeptidase activity"/>
    <property type="evidence" value="ECO:0007669"/>
    <property type="project" value="UniProtKB-KW"/>
</dbReference>
<dbReference type="GO" id="GO:0045148">
    <property type="term" value="F:tripeptide aminopeptidase activity"/>
    <property type="evidence" value="ECO:0007669"/>
    <property type="project" value="UniProtKB-UniRule"/>
</dbReference>
<dbReference type="GO" id="GO:0008270">
    <property type="term" value="F:zinc ion binding"/>
    <property type="evidence" value="ECO:0007669"/>
    <property type="project" value="UniProtKB-UniRule"/>
</dbReference>
<dbReference type="GO" id="GO:0043171">
    <property type="term" value="P:peptide catabolic process"/>
    <property type="evidence" value="ECO:0007669"/>
    <property type="project" value="UniProtKB-UniRule"/>
</dbReference>
<dbReference type="GO" id="GO:0006508">
    <property type="term" value="P:proteolysis"/>
    <property type="evidence" value="ECO:0007669"/>
    <property type="project" value="UniProtKB-UniRule"/>
</dbReference>
<dbReference type="CDD" id="cd03892">
    <property type="entry name" value="M20_peptT"/>
    <property type="match status" value="1"/>
</dbReference>
<dbReference type="FunFam" id="3.30.70.360:FF:000002">
    <property type="entry name" value="Peptidase T"/>
    <property type="match status" value="1"/>
</dbReference>
<dbReference type="Gene3D" id="3.30.70.360">
    <property type="match status" value="1"/>
</dbReference>
<dbReference type="Gene3D" id="3.40.630.10">
    <property type="entry name" value="Zn peptidases"/>
    <property type="match status" value="1"/>
</dbReference>
<dbReference type="HAMAP" id="MF_00550">
    <property type="entry name" value="Aminopeptidase_M20"/>
    <property type="match status" value="1"/>
</dbReference>
<dbReference type="InterPro" id="IPR001261">
    <property type="entry name" value="ArgE/DapE_CS"/>
</dbReference>
<dbReference type="InterPro" id="IPR036264">
    <property type="entry name" value="Bact_exopeptidase_dim_dom"/>
</dbReference>
<dbReference type="InterPro" id="IPR002933">
    <property type="entry name" value="Peptidase_M20"/>
</dbReference>
<dbReference type="InterPro" id="IPR011650">
    <property type="entry name" value="Peptidase_M20_dimer"/>
</dbReference>
<dbReference type="InterPro" id="IPR010161">
    <property type="entry name" value="Peptidase_M20B"/>
</dbReference>
<dbReference type="NCBIfam" id="TIGR01882">
    <property type="entry name" value="peptidase-T"/>
    <property type="match status" value="1"/>
</dbReference>
<dbReference type="NCBIfam" id="NF003976">
    <property type="entry name" value="PRK05469.1"/>
    <property type="match status" value="1"/>
</dbReference>
<dbReference type="NCBIfam" id="NF009920">
    <property type="entry name" value="PRK13381.1"/>
    <property type="match status" value="1"/>
</dbReference>
<dbReference type="PANTHER" id="PTHR42994">
    <property type="entry name" value="PEPTIDASE T"/>
    <property type="match status" value="1"/>
</dbReference>
<dbReference type="PANTHER" id="PTHR42994:SF1">
    <property type="entry name" value="PEPTIDASE T"/>
    <property type="match status" value="1"/>
</dbReference>
<dbReference type="Pfam" id="PF07687">
    <property type="entry name" value="M20_dimer"/>
    <property type="match status" value="1"/>
</dbReference>
<dbReference type="Pfam" id="PF01546">
    <property type="entry name" value="Peptidase_M20"/>
    <property type="match status" value="1"/>
</dbReference>
<dbReference type="PIRSF" id="PIRSF037215">
    <property type="entry name" value="Peptidase_M20B"/>
    <property type="match status" value="1"/>
</dbReference>
<dbReference type="SUPFAM" id="SSF55031">
    <property type="entry name" value="Bacterial exopeptidase dimerisation domain"/>
    <property type="match status" value="1"/>
</dbReference>
<dbReference type="SUPFAM" id="SSF53187">
    <property type="entry name" value="Zn-dependent exopeptidases"/>
    <property type="match status" value="1"/>
</dbReference>
<dbReference type="PROSITE" id="PS00758">
    <property type="entry name" value="ARGE_DAPE_CPG2_1"/>
    <property type="match status" value="1"/>
</dbReference>
<dbReference type="PROSITE" id="PS00759">
    <property type="entry name" value="ARGE_DAPE_CPG2_2"/>
    <property type="match status" value="1"/>
</dbReference>
<organism>
    <name type="scientific">Staphylococcus aureus (strain USA300)</name>
    <dbReference type="NCBI Taxonomy" id="367830"/>
    <lineage>
        <taxon>Bacteria</taxon>
        <taxon>Bacillati</taxon>
        <taxon>Bacillota</taxon>
        <taxon>Bacilli</taxon>
        <taxon>Bacillales</taxon>
        <taxon>Staphylococcaceae</taxon>
        <taxon>Staphylococcus</taxon>
    </lineage>
</organism>
<sequence length="408" mass="45848">MKNQLIDRLTRYTTIDTQSDPKSTTTPSTEKQWDLLHLLEKELQQLGLPTDLDENGYLFATLESNIDVDVPTVGFLAHVDTSPDFNASNVKPQIIENYDGKPYKLGNTKRVLDPKVFPELNSLVGHTLMVTDGTSLLGADDKAGIVEIMEAICYLQEHPEIKHGTIRIGFTPDEEIGRGPHKFDVDRFNADFAYTMDGSQYGELQYESFNAAEAVITCHGVNVHPGSAKNAMVNAIRLGEQFDSLLPDSEVPERTEGYEGFYHLMNFEGTVEKATLQYIIRDHDKKQFELRKKRILEIRDDINAHFENYPVKVDISDQYFNMAEKILPLPHIIDIPKRVFAKLDIPANTEPIRGGTDGSQLSFMGLPTPNIFTGCGNFHGPYEYASIDVMEKAVQVIIGIVEDIAENH</sequence>
<reference key="1">
    <citation type="journal article" date="2006" name="Lancet">
        <title>Complete genome sequence of USA300, an epidemic clone of community-acquired meticillin-resistant Staphylococcus aureus.</title>
        <authorList>
            <person name="Diep B.A."/>
            <person name="Gill S.R."/>
            <person name="Chang R.F."/>
            <person name="Phan T.H."/>
            <person name="Chen J.H."/>
            <person name="Davidson M.G."/>
            <person name="Lin F."/>
            <person name="Lin J."/>
            <person name="Carleton H.A."/>
            <person name="Mongodin E.F."/>
            <person name="Sensabaugh G.F."/>
            <person name="Perdreau-Remington F."/>
        </authorList>
    </citation>
    <scope>NUCLEOTIDE SEQUENCE [LARGE SCALE GENOMIC DNA]</scope>
    <source>
        <strain>USA300</strain>
    </source>
</reference>
<proteinExistence type="inferred from homology"/>
<gene>
    <name evidence="1" type="primary">pepT</name>
    <name type="ordered locus">SAUSA300_0727</name>
</gene>
<keyword id="KW-0031">Aminopeptidase</keyword>
<keyword id="KW-0963">Cytoplasm</keyword>
<keyword id="KW-0378">Hydrolase</keyword>
<keyword id="KW-0479">Metal-binding</keyword>
<keyword id="KW-0482">Metalloprotease</keyword>
<keyword id="KW-0645">Protease</keyword>
<keyword id="KW-0862">Zinc</keyword>